<feature type="initiator methionine" description="Removed" evidence="3">
    <location>
        <position position="1"/>
    </location>
</feature>
<feature type="chain" id="PRO_0000079320" description="ADP-ribosylation factor 1">
    <location>
        <begin position="2"/>
        <end position="181"/>
    </location>
</feature>
<feature type="binding site" evidence="1">
    <location>
        <begin position="24"/>
        <end position="31"/>
    </location>
    <ligand>
        <name>GTP</name>
        <dbReference type="ChEBI" id="CHEBI:37565"/>
    </ligand>
</feature>
<feature type="binding site" evidence="1">
    <location>
        <begin position="67"/>
        <end position="71"/>
    </location>
    <ligand>
        <name>GTP</name>
        <dbReference type="ChEBI" id="CHEBI:37565"/>
    </ligand>
</feature>
<feature type="binding site" evidence="1">
    <location>
        <begin position="126"/>
        <end position="129"/>
    </location>
    <ligand>
        <name>GTP</name>
        <dbReference type="ChEBI" id="CHEBI:37565"/>
    </ligand>
</feature>
<feature type="lipid moiety-binding region" description="N-myristoyl glycine" evidence="3">
    <location>
        <position position="2"/>
    </location>
</feature>
<accession>Q06396</accession>
<accession>Q0JIB5</accession>
<accession>Q5VQQ6</accession>
<accession>Q7F2H4</accession>
<protein>
    <recommendedName>
        <fullName>ADP-ribosylation factor 1</fullName>
        <ecNumber evidence="2">3.6.5.2</ecNumber>
    </recommendedName>
    <alternativeName>
        <fullName>13 kDa cold-induced protein</fullName>
    </alternativeName>
</protein>
<organism>
    <name type="scientific">Oryza sativa subsp. japonica</name>
    <name type="common">Rice</name>
    <dbReference type="NCBI Taxonomy" id="39947"/>
    <lineage>
        <taxon>Eukaryota</taxon>
        <taxon>Viridiplantae</taxon>
        <taxon>Streptophyta</taxon>
        <taxon>Embryophyta</taxon>
        <taxon>Tracheophyta</taxon>
        <taxon>Spermatophyta</taxon>
        <taxon>Magnoliopsida</taxon>
        <taxon>Liliopsida</taxon>
        <taxon>Poales</taxon>
        <taxon>Poaceae</taxon>
        <taxon>BOP clade</taxon>
        <taxon>Oryzoideae</taxon>
        <taxon>Oryzeae</taxon>
        <taxon>Oryzinae</taxon>
        <taxon>Oryza</taxon>
        <taxon>Oryza sativa</taxon>
    </lineage>
</organism>
<comment type="function">
    <text>GTP-binding protein involved in protein trafficking; may modulate vesicle budding and uncoating within the Golgi apparatus.</text>
</comment>
<comment type="catalytic activity">
    <reaction evidence="2">
        <text>GTP + H2O = GDP + phosphate + H(+)</text>
        <dbReference type="Rhea" id="RHEA:19669"/>
        <dbReference type="ChEBI" id="CHEBI:15377"/>
        <dbReference type="ChEBI" id="CHEBI:15378"/>
        <dbReference type="ChEBI" id="CHEBI:37565"/>
        <dbReference type="ChEBI" id="CHEBI:43474"/>
        <dbReference type="ChEBI" id="CHEBI:58189"/>
        <dbReference type="EC" id="3.6.5.2"/>
    </reaction>
</comment>
<comment type="subcellular location">
    <subcellularLocation>
        <location>Golgi apparatus</location>
    </subcellularLocation>
</comment>
<comment type="tissue specificity">
    <text>Seedling shoots.</text>
</comment>
<comment type="similarity">
    <text evidence="4">Belongs to the small GTPase superfamily. Arf family.</text>
</comment>
<comment type="sequence caution" evidence="4">
    <conflict type="frameshift">
        <sequence resource="EMBL-CDS" id="BAA01630"/>
    </conflict>
</comment>
<comment type="sequence caution" evidence="4">
    <conflict type="miscellaneous discrepancy">
        <sequence resource="EMBL-CDS" id="BAA01630"/>
    </conflict>
    <text>Sequencing errors.</text>
</comment>
<comment type="sequence caution" evidence="4">
    <conflict type="erroneous gene model prediction">
        <sequence resource="EMBL-CDS" id="BAB90396"/>
    </conflict>
</comment>
<gene>
    <name type="ordered locus">Os01g0813400</name>
    <name type="ordered locus">LOC_Os01g59790</name>
    <name evidence="5" type="ORF">OsJ_03844</name>
    <name type="ORF">OSJNBa0085D07.10</name>
    <name type="ORF">P0425G02.41</name>
    <name type="ORF">P0432B10.14</name>
</gene>
<proteinExistence type="evidence at transcript level"/>
<keyword id="KW-0931">ER-Golgi transport</keyword>
<keyword id="KW-0333">Golgi apparatus</keyword>
<keyword id="KW-0342">GTP-binding</keyword>
<keyword id="KW-0378">Hydrolase</keyword>
<keyword id="KW-0449">Lipoprotein</keyword>
<keyword id="KW-0519">Myristate</keyword>
<keyword id="KW-0547">Nucleotide-binding</keyword>
<keyword id="KW-0653">Protein transport</keyword>
<keyword id="KW-1185">Reference proteome</keyword>
<keyword id="KW-0813">Transport</keyword>
<name>ARF1_ORYSJ</name>
<reference key="1">
    <citation type="journal article" date="2002" name="Nature">
        <title>The genome sequence and structure of rice chromosome 1.</title>
        <authorList>
            <person name="Sasaki T."/>
            <person name="Matsumoto T."/>
            <person name="Yamamoto K."/>
            <person name="Sakata K."/>
            <person name="Baba T."/>
            <person name="Katayose Y."/>
            <person name="Wu J."/>
            <person name="Niimura Y."/>
            <person name="Cheng Z."/>
            <person name="Nagamura Y."/>
            <person name="Antonio B.A."/>
            <person name="Kanamori H."/>
            <person name="Hosokawa S."/>
            <person name="Masukawa M."/>
            <person name="Arikawa K."/>
            <person name="Chiden Y."/>
            <person name="Hayashi M."/>
            <person name="Okamoto M."/>
            <person name="Ando T."/>
            <person name="Aoki H."/>
            <person name="Arita K."/>
            <person name="Hamada M."/>
            <person name="Harada C."/>
            <person name="Hijishita S."/>
            <person name="Honda M."/>
            <person name="Ichikawa Y."/>
            <person name="Idonuma A."/>
            <person name="Iijima M."/>
            <person name="Ikeda M."/>
            <person name="Ikeno M."/>
            <person name="Ito S."/>
            <person name="Ito T."/>
            <person name="Ito Y."/>
            <person name="Ito Y."/>
            <person name="Iwabuchi A."/>
            <person name="Kamiya K."/>
            <person name="Karasawa W."/>
            <person name="Katagiri S."/>
            <person name="Kikuta A."/>
            <person name="Kobayashi N."/>
            <person name="Kono I."/>
            <person name="Machita K."/>
            <person name="Maehara T."/>
            <person name="Mizuno H."/>
            <person name="Mizubayashi T."/>
            <person name="Mukai Y."/>
            <person name="Nagasaki H."/>
            <person name="Nakashima M."/>
            <person name="Nakama Y."/>
            <person name="Nakamichi Y."/>
            <person name="Nakamura M."/>
            <person name="Namiki N."/>
            <person name="Negishi M."/>
            <person name="Ohta I."/>
            <person name="Ono N."/>
            <person name="Saji S."/>
            <person name="Sakai K."/>
            <person name="Shibata M."/>
            <person name="Shimokawa T."/>
            <person name="Shomura A."/>
            <person name="Song J."/>
            <person name="Takazaki Y."/>
            <person name="Terasawa K."/>
            <person name="Tsuji K."/>
            <person name="Waki K."/>
            <person name="Yamagata H."/>
            <person name="Yamane H."/>
            <person name="Yoshiki S."/>
            <person name="Yoshihara R."/>
            <person name="Yukawa K."/>
            <person name="Zhong H."/>
            <person name="Iwama H."/>
            <person name="Endo T."/>
            <person name="Ito H."/>
            <person name="Hahn J.H."/>
            <person name="Kim H.-I."/>
            <person name="Eun M.-Y."/>
            <person name="Yano M."/>
            <person name="Jiang J."/>
            <person name="Gojobori T."/>
        </authorList>
    </citation>
    <scope>NUCLEOTIDE SEQUENCE [LARGE SCALE GENOMIC DNA]</scope>
    <source>
        <strain>cv. Nipponbare</strain>
    </source>
</reference>
<reference key="2">
    <citation type="journal article" date="2005" name="Nature">
        <title>The map-based sequence of the rice genome.</title>
        <authorList>
            <consortium name="International rice genome sequencing project (IRGSP)"/>
        </authorList>
    </citation>
    <scope>NUCLEOTIDE SEQUENCE [LARGE SCALE GENOMIC DNA]</scope>
    <source>
        <strain>cv. Nipponbare</strain>
    </source>
</reference>
<reference key="3">
    <citation type="journal article" date="2008" name="Nucleic Acids Res.">
        <title>The rice annotation project database (RAP-DB): 2008 update.</title>
        <authorList>
            <consortium name="The rice annotation project (RAP)"/>
        </authorList>
    </citation>
    <scope>GENOME REANNOTATION</scope>
    <source>
        <strain>cv. Nipponbare</strain>
    </source>
</reference>
<reference key="4">
    <citation type="journal article" date="2013" name="Rice">
        <title>Improvement of the Oryza sativa Nipponbare reference genome using next generation sequence and optical map data.</title>
        <authorList>
            <person name="Kawahara Y."/>
            <person name="de la Bastide M."/>
            <person name="Hamilton J.P."/>
            <person name="Kanamori H."/>
            <person name="McCombie W.R."/>
            <person name="Ouyang S."/>
            <person name="Schwartz D.C."/>
            <person name="Tanaka T."/>
            <person name="Wu J."/>
            <person name="Zhou S."/>
            <person name="Childs K.L."/>
            <person name="Davidson R.M."/>
            <person name="Lin H."/>
            <person name="Quesada-Ocampo L."/>
            <person name="Vaillancourt B."/>
            <person name="Sakai H."/>
            <person name="Lee S.S."/>
            <person name="Kim J."/>
            <person name="Numa H."/>
            <person name="Itoh T."/>
            <person name="Buell C.R."/>
            <person name="Matsumoto T."/>
        </authorList>
    </citation>
    <scope>GENOME REANNOTATION</scope>
    <source>
        <strain>cv. Nipponbare</strain>
    </source>
</reference>
<reference key="5">
    <citation type="journal article" date="2005" name="PLoS Biol.">
        <title>The genomes of Oryza sativa: a history of duplications.</title>
        <authorList>
            <person name="Yu J."/>
            <person name="Wang J."/>
            <person name="Lin W."/>
            <person name="Li S."/>
            <person name="Li H."/>
            <person name="Zhou J."/>
            <person name="Ni P."/>
            <person name="Dong W."/>
            <person name="Hu S."/>
            <person name="Zeng C."/>
            <person name="Zhang J."/>
            <person name="Zhang Y."/>
            <person name="Li R."/>
            <person name="Xu Z."/>
            <person name="Li S."/>
            <person name="Li X."/>
            <person name="Zheng H."/>
            <person name="Cong L."/>
            <person name="Lin L."/>
            <person name="Yin J."/>
            <person name="Geng J."/>
            <person name="Li G."/>
            <person name="Shi J."/>
            <person name="Liu J."/>
            <person name="Lv H."/>
            <person name="Li J."/>
            <person name="Wang J."/>
            <person name="Deng Y."/>
            <person name="Ran L."/>
            <person name="Shi X."/>
            <person name="Wang X."/>
            <person name="Wu Q."/>
            <person name="Li C."/>
            <person name="Ren X."/>
            <person name="Wang J."/>
            <person name="Wang X."/>
            <person name="Li D."/>
            <person name="Liu D."/>
            <person name="Zhang X."/>
            <person name="Ji Z."/>
            <person name="Zhao W."/>
            <person name="Sun Y."/>
            <person name="Zhang Z."/>
            <person name="Bao J."/>
            <person name="Han Y."/>
            <person name="Dong L."/>
            <person name="Ji J."/>
            <person name="Chen P."/>
            <person name="Wu S."/>
            <person name="Liu J."/>
            <person name="Xiao Y."/>
            <person name="Bu D."/>
            <person name="Tan J."/>
            <person name="Yang L."/>
            <person name="Ye C."/>
            <person name="Zhang J."/>
            <person name="Xu J."/>
            <person name="Zhou Y."/>
            <person name="Yu Y."/>
            <person name="Zhang B."/>
            <person name="Zhuang S."/>
            <person name="Wei H."/>
            <person name="Liu B."/>
            <person name="Lei M."/>
            <person name="Yu H."/>
            <person name="Li Y."/>
            <person name="Xu H."/>
            <person name="Wei S."/>
            <person name="He X."/>
            <person name="Fang L."/>
            <person name="Zhang Z."/>
            <person name="Zhang Y."/>
            <person name="Huang X."/>
            <person name="Su Z."/>
            <person name="Tong W."/>
            <person name="Li J."/>
            <person name="Tong Z."/>
            <person name="Li S."/>
            <person name="Ye J."/>
            <person name="Wang L."/>
            <person name="Fang L."/>
            <person name="Lei T."/>
            <person name="Chen C.-S."/>
            <person name="Chen H.-C."/>
            <person name="Xu Z."/>
            <person name="Li H."/>
            <person name="Huang H."/>
            <person name="Zhang F."/>
            <person name="Xu H."/>
            <person name="Li N."/>
            <person name="Zhao C."/>
            <person name="Li S."/>
            <person name="Dong L."/>
            <person name="Huang Y."/>
            <person name="Li L."/>
            <person name="Xi Y."/>
            <person name="Qi Q."/>
            <person name="Li W."/>
            <person name="Zhang B."/>
            <person name="Hu W."/>
            <person name="Zhang Y."/>
            <person name="Tian X."/>
            <person name="Jiao Y."/>
            <person name="Liang X."/>
            <person name="Jin J."/>
            <person name="Gao L."/>
            <person name="Zheng W."/>
            <person name="Hao B."/>
            <person name="Liu S.-M."/>
            <person name="Wang W."/>
            <person name="Yuan L."/>
            <person name="Cao M."/>
            <person name="McDermott J."/>
            <person name="Samudrala R."/>
            <person name="Wang J."/>
            <person name="Wong G.K.-S."/>
            <person name="Yang H."/>
        </authorList>
    </citation>
    <scope>NUCLEOTIDE SEQUENCE [LARGE SCALE GENOMIC DNA]</scope>
    <source>
        <strain>cv. Nipponbare</strain>
    </source>
</reference>
<reference key="6">
    <citation type="journal article" date="2003" name="Science">
        <title>Collection, mapping, and annotation of over 28,000 cDNA clones from japonica rice.</title>
        <authorList>
            <consortium name="The rice full-length cDNA consortium"/>
        </authorList>
    </citation>
    <scope>NUCLEOTIDE SEQUENCE [LARGE SCALE MRNA]</scope>
    <source>
        <strain>cv. Nipponbare</strain>
    </source>
</reference>
<reference key="7">
    <citation type="journal article" date="1992" name="Plant Physiol.">
        <title>Molecular cloning and characterization of genes related to chilling tolerance in rice.</title>
        <authorList>
            <person name="Binh L.T."/>
            <person name="Oono K."/>
        </authorList>
    </citation>
    <scope>PARTIAL NUCLEOTIDE SEQUENCE [MRNA]</scope>
    <source>
        <strain>cv. Nipponbare</strain>
        <tissue>Seedling</tissue>
    </source>
</reference>
<sequence>MGLTFTKLFSRLFAKKEMRILMVGLDAAGKTTILYKLKLGEIVTTIPTIGFNVETVEYKNISFTVWDVGGQDKIRPLWRHYFQNTQGLIFVVDSNDRERVVEARDELHRMLNEDELRDAVLLVFANKQDLPNAMNAAEITDKLGLHSLRQRHWYIQSTCATSGEGLYEGLDWLSNNIASKA</sequence>
<evidence type="ECO:0000250" key="1"/>
<evidence type="ECO:0000250" key="2">
    <source>
        <dbReference type="UniProtKB" id="P84077"/>
    </source>
</evidence>
<evidence type="ECO:0000255" key="3"/>
<evidence type="ECO:0000305" key="4"/>
<evidence type="ECO:0000312" key="5">
    <source>
        <dbReference type="EMBL" id="EEE55569.1"/>
    </source>
</evidence>
<dbReference type="EC" id="3.6.5.2" evidence="2"/>
<dbReference type="EMBL" id="AP003247">
    <property type="protein sequence ID" value="BAD68219.1"/>
    <property type="molecule type" value="Genomic_DNA"/>
</dbReference>
<dbReference type="EMBL" id="AP003570">
    <property type="protein sequence ID" value="BAB90396.1"/>
    <property type="status" value="ALT_SEQ"/>
    <property type="molecule type" value="Genomic_DNA"/>
</dbReference>
<dbReference type="EMBL" id="AP004331">
    <property type="protein sequence ID" value="BAD82682.1"/>
    <property type="molecule type" value="Genomic_DNA"/>
</dbReference>
<dbReference type="EMBL" id="AP008207">
    <property type="protein sequence ID" value="BAF06513.1"/>
    <property type="molecule type" value="Genomic_DNA"/>
</dbReference>
<dbReference type="EMBL" id="AP014957">
    <property type="protein sequence ID" value="BAS74894.1"/>
    <property type="molecule type" value="Genomic_DNA"/>
</dbReference>
<dbReference type="EMBL" id="CM000138">
    <property type="protein sequence ID" value="EEE55569.1"/>
    <property type="molecule type" value="Genomic_DNA"/>
</dbReference>
<dbReference type="EMBL" id="AK062251">
    <property type="protein sequence ID" value="BAG88255.1"/>
    <property type="molecule type" value="mRNA"/>
</dbReference>
<dbReference type="EMBL" id="AK065370">
    <property type="protein sequence ID" value="BAG89491.1"/>
    <property type="molecule type" value="mRNA"/>
</dbReference>
<dbReference type="EMBL" id="D10859">
    <property type="protein sequence ID" value="BAA01630.1"/>
    <property type="status" value="ALT_SEQ"/>
    <property type="molecule type" value="mRNA"/>
</dbReference>
<dbReference type="RefSeq" id="XP_015618373.1">
    <property type="nucleotide sequence ID" value="XM_015762887.1"/>
</dbReference>
<dbReference type="SMR" id="Q06396"/>
<dbReference type="FunCoup" id="Q06396">
    <property type="interactions" value="3216"/>
</dbReference>
<dbReference type="STRING" id="39947.Q06396"/>
<dbReference type="PaxDb" id="39947-Q06396"/>
<dbReference type="EnsemblPlants" id="Os01t0813400-01">
    <property type="protein sequence ID" value="Os01t0813400-01"/>
    <property type="gene ID" value="Os01g0813400"/>
</dbReference>
<dbReference type="Gramene" id="Os01t0813400-01">
    <property type="protein sequence ID" value="Os01t0813400-01"/>
    <property type="gene ID" value="Os01g0813400"/>
</dbReference>
<dbReference type="KEGG" id="dosa:Os01g0813400"/>
<dbReference type="eggNOG" id="KOG0070">
    <property type="taxonomic scope" value="Eukaryota"/>
</dbReference>
<dbReference type="HOGENOM" id="CLU_040729_9_3_1"/>
<dbReference type="InParanoid" id="Q06396"/>
<dbReference type="OMA" id="HEGLHWL"/>
<dbReference type="OrthoDB" id="2011769at2759"/>
<dbReference type="Proteomes" id="UP000000763">
    <property type="component" value="Chromosome 1"/>
</dbReference>
<dbReference type="Proteomes" id="UP000007752">
    <property type="component" value="Chromosome 1"/>
</dbReference>
<dbReference type="Proteomes" id="UP000059680">
    <property type="component" value="Chromosome 1"/>
</dbReference>
<dbReference type="GO" id="GO:0005737">
    <property type="term" value="C:cytoplasm"/>
    <property type="evidence" value="ECO:0000318"/>
    <property type="project" value="GO_Central"/>
</dbReference>
<dbReference type="GO" id="GO:0005794">
    <property type="term" value="C:Golgi apparatus"/>
    <property type="evidence" value="ECO:0007669"/>
    <property type="project" value="UniProtKB-SubCell"/>
</dbReference>
<dbReference type="GO" id="GO:0005525">
    <property type="term" value="F:GTP binding"/>
    <property type="evidence" value="ECO:0000318"/>
    <property type="project" value="GO_Central"/>
</dbReference>
<dbReference type="GO" id="GO:0003924">
    <property type="term" value="F:GTPase activity"/>
    <property type="evidence" value="ECO:0007669"/>
    <property type="project" value="InterPro"/>
</dbReference>
<dbReference type="GO" id="GO:0006886">
    <property type="term" value="P:intracellular protein transport"/>
    <property type="evidence" value="ECO:0000318"/>
    <property type="project" value="GO_Central"/>
</dbReference>
<dbReference type="GO" id="GO:0016192">
    <property type="term" value="P:vesicle-mediated transport"/>
    <property type="evidence" value="ECO:0000318"/>
    <property type="project" value="GO_Central"/>
</dbReference>
<dbReference type="CDD" id="cd04150">
    <property type="entry name" value="Arf1_5_like"/>
    <property type="match status" value="1"/>
</dbReference>
<dbReference type="FunFam" id="3.40.50.300:FF:003500">
    <property type="entry name" value="ADP-ribosylation factor 1"/>
    <property type="match status" value="1"/>
</dbReference>
<dbReference type="Gene3D" id="3.40.50.300">
    <property type="entry name" value="P-loop containing nucleotide triphosphate hydrolases"/>
    <property type="match status" value="1"/>
</dbReference>
<dbReference type="InterPro" id="IPR045872">
    <property type="entry name" value="Arf1-5-like"/>
</dbReference>
<dbReference type="InterPro" id="IPR027417">
    <property type="entry name" value="P-loop_NTPase"/>
</dbReference>
<dbReference type="InterPro" id="IPR005225">
    <property type="entry name" value="Small_GTP-bd"/>
</dbReference>
<dbReference type="InterPro" id="IPR024156">
    <property type="entry name" value="Small_GTPase_ARF"/>
</dbReference>
<dbReference type="InterPro" id="IPR006689">
    <property type="entry name" value="Small_GTPase_ARF/SAR"/>
</dbReference>
<dbReference type="NCBIfam" id="TIGR00231">
    <property type="entry name" value="small_GTP"/>
    <property type="match status" value="1"/>
</dbReference>
<dbReference type="PANTHER" id="PTHR11711">
    <property type="entry name" value="ADP RIBOSYLATION FACTOR-RELATED"/>
    <property type="match status" value="1"/>
</dbReference>
<dbReference type="Pfam" id="PF00025">
    <property type="entry name" value="Arf"/>
    <property type="match status" value="1"/>
</dbReference>
<dbReference type="PRINTS" id="PR00328">
    <property type="entry name" value="SAR1GTPBP"/>
</dbReference>
<dbReference type="SMART" id="SM00177">
    <property type="entry name" value="ARF"/>
    <property type="match status" value="1"/>
</dbReference>
<dbReference type="SMART" id="SM00175">
    <property type="entry name" value="RAB"/>
    <property type="match status" value="1"/>
</dbReference>
<dbReference type="SMART" id="SM00178">
    <property type="entry name" value="SAR"/>
    <property type="match status" value="1"/>
</dbReference>
<dbReference type="SUPFAM" id="SSF52540">
    <property type="entry name" value="P-loop containing nucleoside triphosphate hydrolases"/>
    <property type="match status" value="1"/>
</dbReference>
<dbReference type="PROSITE" id="PS51417">
    <property type="entry name" value="ARF"/>
    <property type="match status" value="1"/>
</dbReference>